<organism>
    <name type="scientific">Xenopus tropicalis</name>
    <name type="common">Western clawed frog</name>
    <name type="synonym">Silurana tropicalis</name>
    <dbReference type="NCBI Taxonomy" id="8364"/>
    <lineage>
        <taxon>Eukaryota</taxon>
        <taxon>Metazoa</taxon>
        <taxon>Chordata</taxon>
        <taxon>Craniata</taxon>
        <taxon>Vertebrata</taxon>
        <taxon>Euteleostomi</taxon>
        <taxon>Amphibia</taxon>
        <taxon>Batrachia</taxon>
        <taxon>Anura</taxon>
        <taxon>Pipoidea</taxon>
        <taxon>Pipidae</taxon>
        <taxon>Xenopodinae</taxon>
        <taxon>Xenopus</taxon>
        <taxon>Silurana</taxon>
    </lineage>
</organism>
<accession>Q28GR1</accession>
<accession>A4IH43</accession>
<feature type="chain" id="PRO_0000235683" description="Translation machinery-associated protein 7">
    <location>
        <begin position="1"/>
        <end position="64"/>
    </location>
</feature>
<feature type="region of interest" description="Disordered" evidence="2">
    <location>
        <begin position="1"/>
        <end position="64"/>
    </location>
</feature>
<feature type="coiled-coil region" evidence="1">
    <location>
        <begin position="21"/>
        <end position="50"/>
    </location>
</feature>
<feature type="compositionally biased region" description="Basic and acidic residues" evidence="2">
    <location>
        <begin position="27"/>
        <end position="45"/>
    </location>
</feature>
<feature type="compositionally biased region" description="Gly residues" evidence="2">
    <location>
        <begin position="53"/>
        <end position="64"/>
    </location>
</feature>
<keyword id="KW-0175">Coiled coil</keyword>
<keyword id="KW-1185">Reference proteome</keyword>
<reference key="1">
    <citation type="submission" date="2006-03" db="EMBL/GenBank/DDBJ databases">
        <authorList>
            <consortium name="Sanger Xenopus tropicalis EST/cDNA project"/>
        </authorList>
    </citation>
    <scope>NUCLEOTIDE SEQUENCE [LARGE SCALE MRNA]</scope>
    <source>
        <tissue>Egg</tissue>
    </source>
</reference>
<reference key="2">
    <citation type="submission" date="2007-03" db="EMBL/GenBank/DDBJ databases">
        <authorList>
            <consortium name="NIH - Xenopus Gene Collection (XGC) project"/>
        </authorList>
    </citation>
    <scope>NUCLEOTIDE SEQUENCE [LARGE SCALE MRNA]</scope>
    <source>
        <tissue>Embryo</tissue>
    </source>
</reference>
<name>TMA7_XENTR</name>
<evidence type="ECO:0000255" key="1"/>
<evidence type="ECO:0000256" key="2">
    <source>
        <dbReference type="SAM" id="MobiDB-lite"/>
    </source>
</evidence>
<evidence type="ECO:0000305" key="3"/>
<sequence length="64" mass="7072">MSGREGGKKKPLKQPKKSNKDMDEDEIAFKQKQKEDQKKLDEMKGKAAQKGPLTGGGIKKSGKK</sequence>
<dbReference type="EMBL" id="CR761261">
    <property type="protein sequence ID" value="CAJ82054.1"/>
    <property type="molecule type" value="mRNA"/>
</dbReference>
<dbReference type="EMBL" id="BC135366">
    <property type="protein sequence ID" value="AAI35367.1"/>
    <property type="molecule type" value="mRNA"/>
</dbReference>
<dbReference type="RefSeq" id="NP_001016374.1">
    <property type="nucleotide sequence ID" value="NM_001016374.2"/>
</dbReference>
<dbReference type="FunCoup" id="Q28GR1">
    <property type="interactions" value="828"/>
</dbReference>
<dbReference type="STRING" id="8364.ENSXETP00000033798"/>
<dbReference type="PaxDb" id="8364-ENSXETP00000053585"/>
<dbReference type="DNASU" id="549128"/>
<dbReference type="GeneID" id="549128"/>
<dbReference type="KEGG" id="xtr:549128"/>
<dbReference type="AGR" id="Xenbase:XB-GENE-5726753"/>
<dbReference type="CTD" id="51372"/>
<dbReference type="Xenbase" id="XB-GENE-5726753">
    <property type="gene designation" value="tma7"/>
</dbReference>
<dbReference type="eggNOG" id="KOG4766">
    <property type="taxonomic scope" value="Eukaryota"/>
</dbReference>
<dbReference type="InParanoid" id="Q28GR1"/>
<dbReference type="OMA" id="KKGPMNT"/>
<dbReference type="Proteomes" id="UP000008143">
    <property type="component" value="Chromosome 4"/>
</dbReference>
<dbReference type="InterPro" id="IPR015157">
    <property type="entry name" value="TMA7"/>
</dbReference>
<dbReference type="PANTHER" id="PTHR28632">
    <property type="entry name" value="TRANSLATION MACHINERY-ASSOCIATED PROTEIN 7"/>
    <property type="match status" value="1"/>
</dbReference>
<dbReference type="Pfam" id="PF09072">
    <property type="entry name" value="TMA7"/>
    <property type="match status" value="1"/>
</dbReference>
<proteinExistence type="inferred from homology"/>
<gene>
    <name type="primary">tma7</name>
    <name type="synonym">ccdc72</name>
    <name type="ORF">TEgg142n01.1</name>
</gene>
<comment type="similarity">
    <text evidence="3">Belongs to the TMA7 family.</text>
</comment>
<protein>
    <recommendedName>
        <fullName>Translation machinery-associated protein 7</fullName>
    </recommendedName>
    <alternativeName>
        <fullName>Coiled-coil domain-containing protein 72</fullName>
    </alternativeName>
</protein>